<reference key="1">
    <citation type="journal article" date="1992" name="J. Bacteriol.">
        <title>Early Caulobacter crescentus genes fliL and fliM are required for flagellar gene expression and normal cell division.</title>
        <authorList>
            <person name="Yu J."/>
            <person name="Shapiro L."/>
        </authorList>
    </citation>
    <scope>NUCLEOTIDE SEQUENCE [GENOMIC DNA]</scope>
</reference>
<reference key="2">
    <citation type="journal article" date="2010" name="J. Bacteriol.">
        <title>The genetic basis of laboratory adaptation in Caulobacter crescentus.</title>
        <authorList>
            <person name="Marks M.E."/>
            <person name="Castro-Rojas C.M."/>
            <person name="Teiling C."/>
            <person name="Du L."/>
            <person name="Kapatral V."/>
            <person name="Walunas T.L."/>
            <person name="Crosson S."/>
        </authorList>
    </citation>
    <scope>NUCLEOTIDE SEQUENCE [LARGE SCALE GENOMIC DNA]</scope>
    <source>
        <strain>NA1000 / CB15N</strain>
    </source>
</reference>
<reference key="3">
    <citation type="journal article" date="1994" name="J. Mol. Biol.">
        <title>Caulobacter flagellar function, but not assembly, requires FliL, a non-polarly localized membrane protein present in all cell types.</title>
        <authorList>
            <person name="Jenal U."/>
            <person name="White J."/>
            <person name="Shapiro L."/>
        </authorList>
    </citation>
    <scope>FUNCTION</scope>
    <scope>SUBCELLULAR LOCATION</scope>
    <scope>INDUCTION</scope>
    <scope>DISRUPTION PHENOTYPE</scope>
</reference>
<reference key="4">
    <citation type="journal article" date="1995" name="J. Mol. Biol.">
        <authorList>
            <person name="Jenal U."/>
            <person name="White J."/>
            <person name="Shapiro L."/>
        </authorList>
    </citation>
    <scope>ERRATUM OF PUBMED:7932752</scope>
</reference>
<evidence type="ECO:0000255" key="1"/>
<evidence type="ECO:0000256" key="2">
    <source>
        <dbReference type="SAM" id="MobiDB-lite"/>
    </source>
</evidence>
<evidence type="ECO:0000269" key="3">
    <source>
    </source>
</evidence>
<evidence type="ECO:0000305" key="4"/>
<keyword id="KW-0997">Cell inner membrane</keyword>
<keyword id="KW-1003">Cell membrane</keyword>
<keyword id="KW-0145">Chemotaxis</keyword>
<keyword id="KW-0283">Flagellar rotation</keyword>
<keyword id="KW-0472">Membrane</keyword>
<keyword id="KW-1185">Reference proteome</keyword>
<keyword id="KW-0812">Transmembrane</keyword>
<keyword id="KW-1133">Transmembrane helix</keyword>
<accession>B8GXB6</accession>
<accession>P34008</accession>
<sequence>MAKKPEKEAPAPEGEEGAEGEAPAKKKPPILIIAIAAGVLVLGGGGAAAFFLLKPKPAAEAGEHGEKKEEKKKEKKKEEKGDKKDAEKGAEGAAGTPVIKEGPDGVVFYTLPDIVVNMQTADGKSTFLKLKLTFELPDEETADELTPNLPRLQDMFQTFLRELRPEDLNGSQGTYQLRVELLRRVNLVAAPAKVNAVLIEEMLIN</sequence>
<name>FLIL_CAUVN</name>
<protein>
    <recommendedName>
        <fullName>Flagellar FliL protein</fullName>
    </recommendedName>
</protein>
<comment type="function">
    <text evidence="3">Controls the rotational direction of flagella during chemotaxis.</text>
</comment>
<comment type="subcellular location">
    <subcellularLocation>
        <location evidence="3">Cell inner membrane</location>
        <topology evidence="3">Single-pass membrane protein</topology>
    </subcellularLocation>
    <text>Distributed throughout the cell inner membrane and not just at the poles;.</text>
</comment>
<comment type="induction">
    <text evidence="3">Found in all cell types and all developmental stages (at protein level), the transcript is turned off in swarmer cells and turned on in stalked cells.</text>
</comment>
<comment type="disruption phenotype">
    <text evidence="3">Forms a complete but paralyzed flagellum.</text>
</comment>
<comment type="similarity">
    <text evidence="4">Belongs to the FliL family.</text>
</comment>
<gene>
    <name type="primary">fliL</name>
    <name type="ordered locus">CCNA_02141</name>
</gene>
<proteinExistence type="evidence at protein level"/>
<dbReference type="EMBL" id="M85232">
    <property type="protein sequence ID" value="AAA62448.1"/>
    <property type="molecule type" value="Genomic_DNA"/>
</dbReference>
<dbReference type="EMBL" id="CP001340">
    <property type="protein sequence ID" value="ACL95606.1"/>
    <property type="molecule type" value="Genomic_DNA"/>
</dbReference>
<dbReference type="RefSeq" id="WP_012640398.1">
    <property type="nucleotide sequence ID" value="NC_011916.1"/>
</dbReference>
<dbReference type="RefSeq" id="YP_002517514.1">
    <property type="nucleotide sequence ID" value="NC_011916.1"/>
</dbReference>
<dbReference type="SMR" id="B8GXB6"/>
<dbReference type="GeneID" id="7330447"/>
<dbReference type="KEGG" id="ccs:CCNA_02141"/>
<dbReference type="PATRIC" id="fig|565050.3.peg.2099"/>
<dbReference type="HOGENOM" id="CLU_099018_2_1_5"/>
<dbReference type="OrthoDB" id="7304620at2"/>
<dbReference type="Proteomes" id="UP000001364">
    <property type="component" value="Chromosome"/>
</dbReference>
<dbReference type="GO" id="GO:0009425">
    <property type="term" value="C:bacterial-type flagellum basal body"/>
    <property type="evidence" value="ECO:0007669"/>
    <property type="project" value="InterPro"/>
</dbReference>
<dbReference type="GO" id="GO:0005886">
    <property type="term" value="C:plasma membrane"/>
    <property type="evidence" value="ECO:0007669"/>
    <property type="project" value="UniProtKB-SubCell"/>
</dbReference>
<dbReference type="GO" id="GO:0071978">
    <property type="term" value="P:bacterial-type flagellum-dependent swarming motility"/>
    <property type="evidence" value="ECO:0007669"/>
    <property type="project" value="TreeGrafter"/>
</dbReference>
<dbReference type="GO" id="GO:0006935">
    <property type="term" value="P:chemotaxis"/>
    <property type="evidence" value="ECO:0007669"/>
    <property type="project" value="UniProtKB-KW"/>
</dbReference>
<dbReference type="InterPro" id="IPR005503">
    <property type="entry name" value="FliL"/>
</dbReference>
<dbReference type="PANTHER" id="PTHR35091">
    <property type="entry name" value="FLAGELLAR PROTEIN FLIL"/>
    <property type="match status" value="1"/>
</dbReference>
<dbReference type="PANTHER" id="PTHR35091:SF2">
    <property type="entry name" value="FLAGELLAR PROTEIN FLIL"/>
    <property type="match status" value="1"/>
</dbReference>
<dbReference type="Pfam" id="PF03748">
    <property type="entry name" value="FliL"/>
    <property type="match status" value="1"/>
</dbReference>
<feature type="chain" id="PRO_0000395336" description="Flagellar FliL protein">
    <location>
        <begin position="1"/>
        <end position="205"/>
    </location>
</feature>
<feature type="transmembrane region" description="Helical" evidence="1">
    <location>
        <begin position="30"/>
        <end position="50"/>
    </location>
</feature>
<feature type="region of interest" description="Disordered" evidence="2">
    <location>
        <begin position="1"/>
        <end position="25"/>
    </location>
</feature>
<feature type="region of interest" description="Not required for flagellum motility, although mutants lcaking this region swim less smoothly and are more sensitive to O(2) deprivation">
    <location>
        <begin position="26"/>
        <end position="63"/>
    </location>
</feature>
<feature type="region of interest" description="Disordered" evidence="2">
    <location>
        <begin position="58"/>
        <end position="98"/>
    </location>
</feature>
<feature type="compositionally biased region" description="Basic and acidic residues" evidence="2">
    <location>
        <begin position="1"/>
        <end position="10"/>
    </location>
</feature>
<feature type="compositionally biased region" description="Basic and acidic residues" evidence="2">
    <location>
        <begin position="61"/>
        <end position="90"/>
    </location>
</feature>
<feature type="sequence conflict" description="In Ref. 1; AAA62448." evidence="4" ref="1">
    <original>K</original>
    <variation>E</variation>
    <location>
        <position position="56"/>
    </location>
</feature>
<feature type="sequence conflict" description="In Ref. 1; AAA62448." evidence="4" ref="1">
    <original>GAAGTPVIKE</original>
    <variation>RRWDSGDQG</variation>
    <location>
        <begin position="92"/>
        <end position="101"/>
    </location>
</feature>
<organism>
    <name type="scientific">Caulobacter vibrioides (strain NA1000 / CB15N)</name>
    <name type="common">Caulobacter crescentus</name>
    <dbReference type="NCBI Taxonomy" id="565050"/>
    <lineage>
        <taxon>Bacteria</taxon>
        <taxon>Pseudomonadati</taxon>
        <taxon>Pseudomonadota</taxon>
        <taxon>Alphaproteobacteria</taxon>
        <taxon>Caulobacterales</taxon>
        <taxon>Caulobacteraceae</taxon>
        <taxon>Caulobacter</taxon>
    </lineage>
</organism>